<sequence length="322" mass="35165">MDTSSINAQSIFDDNAAMLKLSWLTGHEGWERGFSADTVANATSSADLVGHLNLIHPNRIQVLGEAEIDYYQRQTDEDRSRHMAELIALEPPFLVVAGGAAAPPELVLRCTRSSTPLFTTPMSAAAVIDSLRLYMSRILAPRATLHGVFLDILGMGVLLTGDSGLGKSELGLELISRGHGLVADDAVDFVRLGPDFVEGRCPPLLQNLLEVRGLGLLDIKTIFGETAVRRKMKLKLIVQLVRRPDGEFQRLPLESQTVDVLGLPISKVTIQVAAGRNLAVLVEAAVRNTILQLRGIDTLRDFMDRQRLAMQDPDSQFPGKLV</sequence>
<proteinExistence type="inferred from homology"/>
<protein>
    <recommendedName>
        <fullName evidence="1">HPr kinase/phosphorylase</fullName>
        <shortName evidence="1">HPrK/P</shortName>
        <ecNumber evidence="1">2.7.11.-</ecNumber>
        <ecNumber evidence="1">2.7.4.-</ecNumber>
    </recommendedName>
    <alternativeName>
        <fullName evidence="1">HPr(Ser) kinase/phosphorylase</fullName>
    </alternativeName>
</protein>
<organism>
    <name type="scientific">Burkholderia pseudomallei (strain 1710b)</name>
    <dbReference type="NCBI Taxonomy" id="320372"/>
    <lineage>
        <taxon>Bacteria</taxon>
        <taxon>Pseudomonadati</taxon>
        <taxon>Pseudomonadota</taxon>
        <taxon>Betaproteobacteria</taxon>
        <taxon>Burkholderiales</taxon>
        <taxon>Burkholderiaceae</taxon>
        <taxon>Burkholderia</taxon>
        <taxon>pseudomallei group</taxon>
    </lineage>
</organism>
<comment type="function">
    <text evidence="1">Catalyzes the ATP- as well as the pyrophosphate-dependent phosphorylation of a specific serine residue in HPr, a phosphocarrier protein of the phosphoenolpyruvate-dependent sugar phosphotransferase system (PTS). HprK/P also catalyzes the pyrophosphate-producing, inorganic phosphate-dependent dephosphorylation (phosphorolysis) of seryl-phosphorylated HPr (P-Ser-HPr).</text>
</comment>
<comment type="catalytic activity">
    <reaction evidence="1">
        <text>[HPr protein]-L-serine + ATP = [HPr protein]-O-phospho-L-serine + ADP + H(+)</text>
        <dbReference type="Rhea" id="RHEA:46600"/>
        <dbReference type="Rhea" id="RHEA-COMP:11602"/>
        <dbReference type="Rhea" id="RHEA-COMP:11603"/>
        <dbReference type="ChEBI" id="CHEBI:15378"/>
        <dbReference type="ChEBI" id="CHEBI:29999"/>
        <dbReference type="ChEBI" id="CHEBI:30616"/>
        <dbReference type="ChEBI" id="CHEBI:83421"/>
        <dbReference type="ChEBI" id="CHEBI:456216"/>
    </reaction>
</comment>
<comment type="catalytic activity">
    <reaction evidence="1">
        <text>[HPr protein]-O-phospho-L-serine + phosphate + H(+) = [HPr protein]-L-serine + diphosphate</text>
        <dbReference type="Rhea" id="RHEA:46604"/>
        <dbReference type="Rhea" id="RHEA-COMP:11602"/>
        <dbReference type="Rhea" id="RHEA-COMP:11603"/>
        <dbReference type="ChEBI" id="CHEBI:15378"/>
        <dbReference type="ChEBI" id="CHEBI:29999"/>
        <dbReference type="ChEBI" id="CHEBI:33019"/>
        <dbReference type="ChEBI" id="CHEBI:43474"/>
        <dbReference type="ChEBI" id="CHEBI:83421"/>
    </reaction>
</comment>
<comment type="cofactor">
    <cofactor evidence="1">
        <name>Mg(2+)</name>
        <dbReference type="ChEBI" id="CHEBI:18420"/>
    </cofactor>
</comment>
<comment type="subunit">
    <text evidence="1">Homohexamer.</text>
</comment>
<comment type="domain">
    <text evidence="1">The Walker A ATP-binding motif also binds Pi and PPi.</text>
</comment>
<comment type="miscellaneous">
    <text evidence="1">Both phosphorylation and phosphorolysis are carried out by the same active site and suggest a common mechanism for both reactions.</text>
</comment>
<comment type="similarity">
    <text evidence="1">Belongs to the HPrK/P family.</text>
</comment>
<accession>Q3JW78</accession>
<evidence type="ECO:0000255" key="1">
    <source>
        <dbReference type="HAMAP-Rule" id="MF_01249"/>
    </source>
</evidence>
<feature type="chain" id="PRO_1000067135" description="HPr kinase/phosphorylase">
    <location>
        <begin position="1"/>
        <end position="322"/>
    </location>
</feature>
<feature type="region of interest" description="Important for the catalytic mechanism of both phosphorylation and dephosphorylation" evidence="1">
    <location>
        <begin position="209"/>
        <end position="218"/>
    </location>
</feature>
<feature type="region of interest" description="Important for the catalytic mechanism of dephosphorylation" evidence="1">
    <location>
        <begin position="271"/>
        <end position="276"/>
    </location>
</feature>
<feature type="active site" evidence="1">
    <location>
        <position position="146"/>
    </location>
</feature>
<feature type="active site" evidence="1">
    <location>
        <position position="167"/>
    </location>
</feature>
<feature type="active site" description="Proton acceptor; for phosphorylation activity. Proton donor; for dephosphorylation activity" evidence="1">
    <location>
        <position position="185"/>
    </location>
</feature>
<feature type="active site" evidence="1">
    <location>
        <position position="250"/>
    </location>
</feature>
<feature type="binding site" evidence="1">
    <location>
        <begin position="161"/>
        <end position="168"/>
    </location>
    <ligand>
        <name>ATP</name>
        <dbReference type="ChEBI" id="CHEBI:30616"/>
    </ligand>
</feature>
<feature type="binding site" evidence="1">
    <location>
        <position position="168"/>
    </location>
    <ligand>
        <name>Mg(2+)</name>
        <dbReference type="ChEBI" id="CHEBI:18420"/>
    </ligand>
</feature>
<feature type="binding site" evidence="1">
    <location>
        <position position="210"/>
    </location>
    <ligand>
        <name>Mg(2+)</name>
        <dbReference type="ChEBI" id="CHEBI:18420"/>
    </ligand>
</feature>
<name>HPRK_BURP1</name>
<reference key="1">
    <citation type="journal article" date="2010" name="Genome Biol. Evol.">
        <title>Continuing evolution of Burkholderia mallei through genome reduction and large-scale rearrangements.</title>
        <authorList>
            <person name="Losada L."/>
            <person name="Ronning C.M."/>
            <person name="DeShazer D."/>
            <person name="Woods D."/>
            <person name="Fedorova N."/>
            <person name="Kim H.S."/>
            <person name="Shabalina S.A."/>
            <person name="Pearson T.R."/>
            <person name="Brinkac L."/>
            <person name="Tan P."/>
            <person name="Nandi T."/>
            <person name="Crabtree J."/>
            <person name="Badger J."/>
            <person name="Beckstrom-Sternberg S."/>
            <person name="Saqib M."/>
            <person name="Schutzer S.E."/>
            <person name="Keim P."/>
            <person name="Nierman W.C."/>
        </authorList>
    </citation>
    <scope>NUCLEOTIDE SEQUENCE [LARGE SCALE GENOMIC DNA]</scope>
    <source>
        <strain>1710b</strain>
    </source>
</reference>
<keyword id="KW-0067">ATP-binding</keyword>
<keyword id="KW-0418">Kinase</keyword>
<keyword id="KW-0460">Magnesium</keyword>
<keyword id="KW-0479">Metal-binding</keyword>
<keyword id="KW-0511">Multifunctional enzyme</keyword>
<keyword id="KW-0547">Nucleotide-binding</keyword>
<keyword id="KW-0723">Serine/threonine-protein kinase</keyword>
<keyword id="KW-0808">Transferase</keyword>
<dbReference type="EC" id="2.7.11.-" evidence="1"/>
<dbReference type="EC" id="2.7.4.-" evidence="1"/>
<dbReference type="EMBL" id="CP000124">
    <property type="protein sequence ID" value="ABA49784.1"/>
    <property type="molecule type" value="Genomic_DNA"/>
</dbReference>
<dbReference type="RefSeq" id="WP_004195225.1">
    <property type="nucleotide sequence ID" value="NC_007434.1"/>
</dbReference>
<dbReference type="SMR" id="Q3JW78"/>
<dbReference type="EnsemblBacteria" id="ABA49784">
    <property type="protein sequence ID" value="ABA49784"/>
    <property type="gene ID" value="BURPS1710b_0762"/>
</dbReference>
<dbReference type="GeneID" id="93059051"/>
<dbReference type="KEGG" id="bpm:BURPS1710b_0762"/>
<dbReference type="HOGENOM" id="CLU_052030_0_2_4"/>
<dbReference type="Proteomes" id="UP000002700">
    <property type="component" value="Chromosome I"/>
</dbReference>
<dbReference type="GO" id="GO:0005524">
    <property type="term" value="F:ATP binding"/>
    <property type="evidence" value="ECO:0007669"/>
    <property type="project" value="UniProtKB-UniRule"/>
</dbReference>
<dbReference type="GO" id="GO:0000287">
    <property type="term" value="F:magnesium ion binding"/>
    <property type="evidence" value="ECO:0007669"/>
    <property type="project" value="UniProtKB-UniRule"/>
</dbReference>
<dbReference type="GO" id="GO:0000155">
    <property type="term" value="F:phosphorelay sensor kinase activity"/>
    <property type="evidence" value="ECO:0007669"/>
    <property type="project" value="InterPro"/>
</dbReference>
<dbReference type="GO" id="GO:0004674">
    <property type="term" value="F:protein serine/threonine kinase activity"/>
    <property type="evidence" value="ECO:0007669"/>
    <property type="project" value="UniProtKB-KW"/>
</dbReference>
<dbReference type="GO" id="GO:0004712">
    <property type="term" value="F:protein serine/threonine/tyrosine kinase activity"/>
    <property type="evidence" value="ECO:0007669"/>
    <property type="project" value="UniProtKB-UniRule"/>
</dbReference>
<dbReference type="GO" id="GO:0006109">
    <property type="term" value="P:regulation of carbohydrate metabolic process"/>
    <property type="evidence" value="ECO:0007669"/>
    <property type="project" value="UniProtKB-UniRule"/>
</dbReference>
<dbReference type="CDD" id="cd01918">
    <property type="entry name" value="HprK_C"/>
    <property type="match status" value="1"/>
</dbReference>
<dbReference type="FunFam" id="3.40.50.300:FF:000174">
    <property type="entry name" value="HPr kinase/phosphorylase"/>
    <property type="match status" value="1"/>
</dbReference>
<dbReference type="Gene3D" id="3.40.1390.20">
    <property type="entry name" value="HprK N-terminal domain-like"/>
    <property type="match status" value="1"/>
</dbReference>
<dbReference type="Gene3D" id="3.40.50.300">
    <property type="entry name" value="P-loop containing nucleotide triphosphate hydrolases"/>
    <property type="match status" value="1"/>
</dbReference>
<dbReference type="HAMAP" id="MF_01249">
    <property type="entry name" value="HPr_kinase"/>
    <property type="match status" value="1"/>
</dbReference>
<dbReference type="InterPro" id="IPR003755">
    <property type="entry name" value="HPr(Ser)_kin/Pase"/>
</dbReference>
<dbReference type="InterPro" id="IPR011104">
    <property type="entry name" value="Hpr_kin/Pase_C"/>
</dbReference>
<dbReference type="InterPro" id="IPR011126">
    <property type="entry name" value="Hpr_kin/Pase_Hpr_N"/>
</dbReference>
<dbReference type="InterPro" id="IPR027417">
    <property type="entry name" value="P-loop_NTPase"/>
</dbReference>
<dbReference type="InterPro" id="IPR028979">
    <property type="entry name" value="Ser_kin/Pase_Hpr-like_N_sf"/>
</dbReference>
<dbReference type="NCBIfam" id="TIGR00679">
    <property type="entry name" value="hpr-ser"/>
    <property type="match status" value="1"/>
</dbReference>
<dbReference type="PANTHER" id="PTHR30305:SF1">
    <property type="entry name" value="HPR KINASE_PHOSPHORYLASE"/>
    <property type="match status" value="1"/>
</dbReference>
<dbReference type="PANTHER" id="PTHR30305">
    <property type="entry name" value="PROTEIN YJDM-RELATED"/>
    <property type="match status" value="1"/>
</dbReference>
<dbReference type="Pfam" id="PF07475">
    <property type="entry name" value="Hpr_kinase_C"/>
    <property type="match status" value="1"/>
</dbReference>
<dbReference type="Pfam" id="PF02603">
    <property type="entry name" value="Hpr_kinase_N"/>
    <property type="match status" value="1"/>
</dbReference>
<dbReference type="SUPFAM" id="SSF75138">
    <property type="entry name" value="HprK N-terminal domain-like"/>
    <property type="match status" value="1"/>
</dbReference>
<dbReference type="SUPFAM" id="SSF53795">
    <property type="entry name" value="PEP carboxykinase-like"/>
    <property type="match status" value="1"/>
</dbReference>
<gene>
    <name evidence="1" type="primary">hprK</name>
    <name type="ordered locus">BURPS1710b_0762</name>
</gene>